<keyword id="KW-0002">3D-structure</keyword>
<keyword id="KW-1226">Viral baseplate protein</keyword>
<keyword id="KW-1171">Viral genome ejection through host cell envelope</keyword>
<keyword id="KW-1243">Viral long flexible tail ejection system</keyword>
<keyword id="KW-1162">Viral penetration into host cytoplasm</keyword>
<keyword id="KW-1227">Viral tail protein</keyword>
<keyword id="KW-0946">Virion</keyword>
<keyword id="KW-1160">Virus entry into host cell</keyword>
<proteinExistence type="evidence at protein level"/>
<organismHost>
    <name type="scientific">Lactococcus lactis</name>
    <dbReference type="NCBI Taxonomy" id="1358"/>
</organismHost>
<protein>
    <recommendedName>
        <fullName evidence="3">Baseplate protein gp16</fullName>
    </recommendedName>
    <alternativeName>
        <fullName evidence="5">Gene product 16</fullName>
        <shortName evidence="5">Gp16</shortName>
    </alternativeName>
    <alternativeName>
        <fullName evidence="4">Tail-associated lysine-like protein</fullName>
    </alternativeName>
</protein>
<accession>D3KFX4</accession>
<accession>D3WAD4</accession>
<feature type="chain" id="PRO_0000438235" description="Baseplate protein gp16">
    <location>
        <begin position="1"/>
        <end position="375"/>
    </location>
</feature>
<feature type="strand" evidence="7">
    <location>
        <begin position="2"/>
        <end position="8"/>
    </location>
</feature>
<feature type="helix" evidence="7">
    <location>
        <begin position="12"/>
        <end position="15"/>
    </location>
</feature>
<feature type="strand" evidence="7">
    <location>
        <begin position="36"/>
        <end position="49"/>
    </location>
</feature>
<feature type="strand" evidence="7">
    <location>
        <begin position="55"/>
        <end position="61"/>
    </location>
</feature>
<feature type="strand" evidence="7">
    <location>
        <begin position="68"/>
        <end position="80"/>
    </location>
</feature>
<feature type="strand" evidence="7">
    <location>
        <begin position="82"/>
        <end position="84"/>
    </location>
</feature>
<feature type="strand" evidence="7">
    <location>
        <begin position="86"/>
        <end position="100"/>
    </location>
</feature>
<feature type="strand" evidence="7">
    <location>
        <begin position="104"/>
        <end position="110"/>
    </location>
</feature>
<feature type="helix" evidence="7">
    <location>
        <begin position="111"/>
        <end position="115"/>
    </location>
</feature>
<feature type="turn" evidence="7">
    <location>
        <begin position="116"/>
        <end position="118"/>
    </location>
</feature>
<feature type="helix" evidence="7">
    <location>
        <begin position="123"/>
        <end position="126"/>
    </location>
</feature>
<feature type="strand" evidence="7">
    <location>
        <begin position="127"/>
        <end position="129"/>
    </location>
</feature>
<feature type="helix" evidence="7">
    <location>
        <begin position="130"/>
        <end position="137"/>
    </location>
</feature>
<feature type="turn" evidence="7">
    <location>
        <begin position="140"/>
        <end position="142"/>
    </location>
</feature>
<feature type="strand" evidence="7">
    <location>
        <begin position="150"/>
        <end position="152"/>
    </location>
</feature>
<feature type="helix" evidence="7">
    <location>
        <begin position="154"/>
        <end position="157"/>
    </location>
</feature>
<feature type="helix" evidence="7">
    <location>
        <begin position="165"/>
        <end position="167"/>
    </location>
</feature>
<feature type="helix" evidence="7">
    <location>
        <begin position="172"/>
        <end position="183"/>
    </location>
</feature>
<feature type="strand" evidence="7">
    <location>
        <begin position="188"/>
        <end position="193"/>
    </location>
</feature>
<feature type="strand" evidence="7">
    <location>
        <begin position="202"/>
        <end position="208"/>
    </location>
</feature>
<feature type="strand" evidence="7">
    <location>
        <begin position="211"/>
        <end position="214"/>
    </location>
</feature>
<feature type="strand" evidence="7">
    <location>
        <begin position="218"/>
        <end position="222"/>
    </location>
</feature>
<feature type="helix" evidence="7">
    <location>
        <begin position="224"/>
        <end position="226"/>
    </location>
</feature>
<feature type="strand" evidence="7">
    <location>
        <begin position="229"/>
        <end position="232"/>
    </location>
</feature>
<feature type="turn" evidence="7">
    <location>
        <begin position="235"/>
        <end position="237"/>
    </location>
</feature>
<feature type="strand" evidence="7">
    <location>
        <begin position="242"/>
        <end position="248"/>
    </location>
</feature>
<feature type="turn" evidence="7">
    <location>
        <begin position="251"/>
        <end position="254"/>
    </location>
</feature>
<feature type="strand" evidence="7">
    <location>
        <begin position="261"/>
        <end position="265"/>
    </location>
</feature>
<feature type="strand" evidence="7">
    <location>
        <begin position="271"/>
        <end position="273"/>
    </location>
</feature>
<feature type="helix" evidence="7">
    <location>
        <begin position="274"/>
        <end position="276"/>
    </location>
</feature>
<feature type="strand" evidence="7">
    <location>
        <begin position="290"/>
        <end position="295"/>
    </location>
</feature>
<feature type="helix" evidence="7">
    <location>
        <begin position="306"/>
        <end position="310"/>
    </location>
</feature>
<feature type="strand" evidence="7">
    <location>
        <begin position="320"/>
        <end position="325"/>
    </location>
</feature>
<feature type="strand" evidence="7">
    <location>
        <begin position="337"/>
        <end position="342"/>
    </location>
</feature>
<feature type="strand" evidence="7">
    <location>
        <begin position="345"/>
        <end position="356"/>
    </location>
</feature>
<feature type="strand" evidence="7">
    <location>
        <begin position="361"/>
        <end position="366"/>
    </location>
</feature>
<feature type="turn" evidence="7">
    <location>
        <begin position="371"/>
        <end position="373"/>
    </location>
</feature>
<sequence length="375" mass="42837">MLEANVYDNFNPNYYNISDFSMPNGKKEKRGLPIPKARCQVINYELWETGYLYTSSATLTVSVEVGDIVQILFPEVVPIEEALGKKKKLNLDMVYLVTDVDESNKATLKNYFWAMIESLDVPNAITKTTNFAIIDYLIDPNKNNLMSYGYFFNSSIFAGKATINRKAETSSAHDVAKRIFSKVQFQPTTTIQHAPSETDPRNLLFINFASRNWNRKRITTRVDIKQSVTMDTETIVERSAYNFAVVFVKNKATDDYTDPPKMYIAKNNGDVIDYSTYHGDGTDLPDVRTAKTLFYDRDDHGNPPELSTIKVEISPSTIVTRLIFNQNELLPLYVNDLVDIWYEGKLYSGYIADRVKTEFNDRLIFVESGDKPNVI</sequence>
<organism>
    <name type="scientific">Lactococcus phage p2</name>
    <name type="common">Lactococcus lactis bacteriophage p2</name>
    <dbReference type="NCBI Taxonomy" id="254252"/>
    <lineage>
        <taxon>Viruses</taxon>
        <taxon>Duplodnaviria</taxon>
        <taxon>Heunggongvirae</taxon>
        <taxon>Uroviricota</taxon>
        <taxon>Caudoviricetes</taxon>
        <taxon>Skunavirus</taxon>
    </lineage>
</organism>
<name>GP16_BPLP2</name>
<evidence type="ECO:0000269" key="1">
    <source>
    </source>
</evidence>
<evidence type="ECO:0000269" key="2">
    <source>
    </source>
</evidence>
<evidence type="ECO:0000303" key="3">
    <source>
    </source>
</evidence>
<evidence type="ECO:0000303" key="4">
    <source>
    </source>
</evidence>
<evidence type="ECO:0000305" key="5"/>
<evidence type="ECO:0007744" key="6">
    <source>
        <dbReference type="PDB" id="2WZP"/>
    </source>
</evidence>
<evidence type="ECO:0007829" key="7">
    <source>
        <dbReference type="PDB" id="2WZP"/>
    </source>
</evidence>
<reference key="1">
    <citation type="submission" date="2010-02" db="EMBL/GenBank/DDBJ databases">
        <title>Complete genomic sequence of Lactococcus lactis phage p2.</title>
        <authorList>
            <person name="Tremblay D.M."/>
            <person name="Deveau H."/>
            <person name="Moineau S."/>
        </authorList>
    </citation>
    <scope>NUCLEOTIDE SEQUENCE [LARGE SCALE GENOMIC DNA]</scope>
</reference>
<reference evidence="6" key="2">
    <citation type="journal article" date="2010" name="Proc. Natl. Acad. Sci. U.S.A.">
        <title>Structure of lactococcal phage p2 baseplate and its mechanism of activation.</title>
        <authorList>
            <person name="Sciara G."/>
            <person name="Bebeacua C."/>
            <person name="Bron P."/>
            <person name="Tremblay D."/>
            <person name="Ortiz-Lombardia M."/>
            <person name="Lichiere J."/>
            <person name="van Heel M."/>
            <person name="Campanacci V."/>
            <person name="Moineau S."/>
            <person name="Cambillau C."/>
        </authorList>
    </citation>
    <scope>X-RAY CRYSTALLOGRAPHY (2.60 ANGSTROMS)</scope>
    <scope>SUBCELLULAR LOCATION</scope>
    <scope>SUBUNIT</scope>
    <scope>FUNCTION</scope>
</reference>
<reference key="3">
    <citation type="journal article" date="2013" name="J. Virol.">
        <title>Structure, adsorption to host, and infection mechanism of virulent lactococcal phage p2.</title>
        <authorList>
            <person name="Bebeacua C."/>
            <person name="Tremblay D."/>
            <person name="Farenc C."/>
            <person name="Chapot-Chartier M.P."/>
            <person name="Sadovskaya I."/>
            <person name="van Heel M."/>
            <person name="Veesler D."/>
            <person name="Moineau S."/>
            <person name="Cambillau C."/>
        </authorList>
    </citation>
    <scope>STRUCTURE BY ELECTRON MICROSCOPY (22 ANGSTROMS) OF THE TAIL</scope>
    <scope>SUBCELLULAR LOCATION</scope>
</reference>
<dbReference type="EMBL" id="GQ979703">
    <property type="protein sequence ID" value="ADC80091.1"/>
    <property type="molecule type" value="Genomic_DNA"/>
</dbReference>
<dbReference type="RefSeq" id="YP_009613496.1">
    <property type="nucleotide sequence ID" value="NC_042024.1"/>
</dbReference>
<dbReference type="PDB" id="2WZP">
    <property type="method" value="X-ray"/>
    <property type="resolution" value="2.60 A"/>
    <property type="chains" value="R=1-375"/>
</dbReference>
<dbReference type="PDB" id="6ZIG">
    <property type="method" value="EM"/>
    <property type="resolution" value="42.20 A"/>
    <property type="chains" value="1/Y/Z=1-375"/>
</dbReference>
<dbReference type="PDB" id="6ZIH">
    <property type="method" value="EM"/>
    <property type="resolution" value="28.70 A"/>
    <property type="chains" value="1/Y/Z=1-375"/>
</dbReference>
<dbReference type="PDB" id="6ZJJ">
    <property type="method" value="EM"/>
    <property type="resolution" value="22.00 A"/>
    <property type="chains" value="1/Y/Z=1-375"/>
</dbReference>
<dbReference type="PDBsum" id="2WZP"/>
<dbReference type="PDBsum" id="6ZIG"/>
<dbReference type="PDBsum" id="6ZIH"/>
<dbReference type="PDBsum" id="6ZJJ"/>
<dbReference type="EMDB" id="EMD-11225"/>
<dbReference type="EMDB" id="EMD-11226"/>
<dbReference type="SMR" id="D3KFX4"/>
<dbReference type="DIP" id="DIP-59524N"/>
<dbReference type="IntAct" id="D3KFX4">
    <property type="interactions" value="1"/>
</dbReference>
<dbReference type="GeneID" id="40089871"/>
<dbReference type="EvolutionaryTrace" id="D3KFX4"/>
<dbReference type="Proteomes" id="UP000002348">
    <property type="component" value="Segment"/>
</dbReference>
<dbReference type="GO" id="GO:0098025">
    <property type="term" value="C:virus tail, baseplate"/>
    <property type="evidence" value="ECO:0007669"/>
    <property type="project" value="UniProtKB-KW"/>
</dbReference>
<dbReference type="GO" id="GO:0099001">
    <property type="term" value="P:symbiont genome ejection through host cell envelope, long flexible tail mechanism"/>
    <property type="evidence" value="ECO:0007669"/>
    <property type="project" value="UniProtKB-KW"/>
</dbReference>
<dbReference type="Gene3D" id="2.30.300.20">
    <property type="match status" value="1"/>
</dbReference>
<dbReference type="Gene3D" id="3.30.1920.20">
    <property type="match status" value="1"/>
</dbReference>
<dbReference type="Gene3D" id="3.55.50.50">
    <property type="entry name" value="Baseplate protein Gp16, domain 2"/>
    <property type="match status" value="1"/>
</dbReference>
<dbReference type="InterPro" id="IPR031861">
    <property type="entry name" value="Caud_bapl16_1st"/>
</dbReference>
<dbReference type="InterPro" id="IPR048784">
    <property type="entry name" value="Caud_bapl16_2nd"/>
</dbReference>
<dbReference type="InterPro" id="IPR048783">
    <property type="entry name" value="Caud_bapl16_3rd"/>
</dbReference>
<dbReference type="InterPro" id="IPR048782">
    <property type="entry name" value="Caud_bapl16_4th"/>
</dbReference>
<dbReference type="InterPro" id="IPR043075">
    <property type="entry name" value="Gp16_dom1_2"/>
</dbReference>
<dbReference type="InterPro" id="IPR043073">
    <property type="entry name" value="Gp16_domD4"/>
</dbReference>
<dbReference type="Pfam" id="PF16792">
    <property type="entry name" value="Caud_bapl16_1st"/>
    <property type="match status" value="1"/>
</dbReference>
<dbReference type="Pfam" id="PF20954">
    <property type="entry name" value="Caud_bapl16_2nd"/>
    <property type="match status" value="1"/>
</dbReference>
<dbReference type="Pfam" id="PF20953">
    <property type="entry name" value="Caud_bapl16_3rd"/>
    <property type="match status" value="1"/>
</dbReference>
<dbReference type="Pfam" id="PF20955">
    <property type="entry name" value="Caud_bapl16_4th"/>
    <property type="match status" value="1"/>
</dbReference>
<comment type="function">
    <text evidence="1">Forms a dome thereby closing the central channel at the end of the baseplate. Changes its conformation upon activation by calcium allowing the channel to open at the bottom of the baseplate for DNA ejection.</text>
</comment>
<comment type="subunit">
    <text evidence="1">Homotrimer.</text>
</comment>
<comment type="interaction">
    <interactant intactId="EBI-15845184">
        <id>D3KFX4</id>
    </interactant>
    <interactant intactId="EBI-15845172">
        <id>D3WAD3</id>
    </interactant>
    <organismsDiffer>false</organismsDiffer>
    <experiments>8</experiments>
</comment>
<comment type="subcellular location">
    <subcellularLocation>
        <location evidence="1 2">Virion</location>
    </subcellularLocation>
    <text evidence="1">Part of the baseplate.</text>
</comment>
<comment type="similarity">
    <text evidence="5">Belongs to the skunalikevirus baseplate protein gp16 family.</text>
</comment>